<name>QCRC_MYCTO</name>
<sequence>MTKLGFTRSGGSKSGRTRRRLRRRLSGGVLLLIALTIAGGLAAVLTPTPQVAVADESSSALLRTGKQLFDTSCVSCHGANLQGVPDHGPSLIGVGEAAVYFQVSTGRMPAMRGEAQAPRKDPIFDEAQIDAIGAYVQANGGGPTVVRNPDGSIATQSLRGNDLGRGGDLFRLNCASCHNFTGKGGALSSGKYAPDLAPANEQQILTAMLTGPQNMPKFSNRQLSFEAKKDIIAYVKVATEARQPGGYLLGGFGPAPEGMAMWIIGMVAAIGLALWIGARS</sequence>
<reference key="1">
    <citation type="journal article" date="2002" name="J. Bacteriol.">
        <title>Whole-genome comparison of Mycobacterium tuberculosis clinical and laboratory strains.</title>
        <authorList>
            <person name="Fleischmann R.D."/>
            <person name="Alland D."/>
            <person name="Eisen J.A."/>
            <person name="Carpenter L."/>
            <person name="White O."/>
            <person name="Peterson J.D."/>
            <person name="DeBoy R.T."/>
            <person name="Dodson R.J."/>
            <person name="Gwinn M.L."/>
            <person name="Haft D.H."/>
            <person name="Hickey E.K."/>
            <person name="Kolonay J.F."/>
            <person name="Nelson W.C."/>
            <person name="Umayam L.A."/>
            <person name="Ermolaeva M.D."/>
            <person name="Salzberg S.L."/>
            <person name="Delcher A."/>
            <person name="Utterback T.R."/>
            <person name="Weidman J.F."/>
            <person name="Khouri H.M."/>
            <person name="Gill J."/>
            <person name="Mikula A."/>
            <person name="Bishai W."/>
            <person name="Jacobs W.R. Jr."/>
            <person name="Venter J.C."/>
            <person name="Fraser C.M."/>
        </authorList>
    </citation>
    <scope>NUCLEOTIDE SEQUENCE [LARGE SCALE GENOMIC DNA]</scope>
    <source>
        <strain>CDC 1551 / Oshkosh</strain>
    </source>
</reference>
<proteinExistence type="inferred from homology"/>
<keyword id="KW-1003">Cell membrane</keyword>
<keyword id="KW-0249">Electron transport</keyword>
<keyword id="KW-0349">Heme</keyword>
<keyword id="KW-0408">Iron</keyword>
<keyword id="KW-0472">Membrane</keyword>
<keyword id="KW-0479">Metal-binding</keyword>
<keyword id="KW-1185">Reference proteome</keyword>
<keyword id="KW-0677">Repeat</keyword>
<keyword id="KW-0679">Respiratory chain</keyword>
<keyword id="KW-1278">Translocase</keyword>
<keyword id="KW-0812">Transmembrane</keyword>
<keyword id="KW-1133">Transmembrane helix</keyword>
<keyword id="KW-0813">Transport</keyword>
<protein>
    <recommendedName>
        <fullName>Cytochrome bc1 complex cytochrome c subunit</fullName>
        <ecNumber evidence="1">7.1.1.8</ecNumber>
    </recommendedName>
    <alternativeName>
        <fullName>Cytochrome bc1 reductase complex subunit QcrC</fullName>
    </alternativeName>
    <alternativeName>
        <fullName>Ubiquinol--cytochrome c reductase cytochrome c subunit</fullName>
    </alternativeName>
</protein>
<evidence type="ECO:0000250" key="1">
    <source>
        <dbReference type="UniProtKB" id="P9WP35"/>
    </source>
</evidence>
<evidence type="ECO:0000250" key="2">
    <source>
        <dbReference type="UniProtKB" id="Q8NNK5"/>
    </source>
</evidence>
<evidence type="ECO:0000255" key="3"/>
<evidence type="ECO:0000255" key="4">
    <source>
        <dbReference type="PROSITE-ProRule" id="PRU00433"/>
    </source>
</evidence>
<organism>
    <name type="scientific">Mycobacterium tuberculosis (strain CDC 1551 / Oshkosh)</name>
    <dbReference type="NCBI Taxonomy" id="83331"/>
    <lineage>
        <taxon>Bacteria</taxon>
        <taxon>Bacillati</taxon>
        <taxon>Actinomycetota</taxon>
        <taxon>Actinomycetes</taxon>
        <taxon>Mycobacteriales</taxon>
        <taxon>Mycobacteriaceae</taxon>
        <taxon>Mycobacterium</taxon>
        <taxon>Mycobacterium tuberculosis complex</taxon>
    </lineage>
</organism>
<accession>P9WP34</accession>
<accession>L0TBS3</accession>
<accession>P63887</accession>
<accession>Q10386</accession>
<gene>
    <name type="primary">qcrC</name>
    <name type="ordered locus">MT2250</name>
</gene>
<dbReference type="EC" id="7.1.1.8" evidence="1"/>
<dbReference type="EMBL" id="AE000516">
    <property type="protein sequence ID" value="AAK46536.1"/>
    <property type="molecule type" value="Genomic_DNA"/>
</dbReference>
<dbReference type="PIR" id="C70784">
    <property type="entry name" value="C70784"/>
</dbReference>
<dbReference type="RefSeq" id="WP_003411392.1">
    <property type="nucleotide sequence ID" value="NZ_KK341227.1"/>
</dbReference>
<dbReference type="SMR" id="P9WP34"/>
<dbReference type="KEGG" id="mtc:MT2250"/>
<dbReference type="PATRIC" id="fig|83331.31.peg.2425"/>
<dbReference type="HOGENOM" id="CLU_086567_0_0_11"/>
<dbReference type="Proteomes" id="UP000001020">
    <property type="component" value="Chromosome"/>
</dbReference>
<dbReference type="GO" id="GO:0005886">
    <property type="term" value="C:plasma membrane"/>
    <property type="evidence" value="ECO:0007669"/>
    <property type="project" value="UniProtKB-SubCell"/>
</dbReference>
<dbReference type="GO" id="GO:0020037">
    <property type="term" value="F:heme binding"/>
    <property type="evidence" value="ECO:0007669"/>
    <property type="project" value="InterPro"/>
</dbReference>
<dbReference type="GO" id="GO:0005506">
    <property type="term" value="F:iron ion binding"/>
    <property type="evidence" value="ECO:0007669"/>
    <property type="project" value="InterPro"/>
</dbReference>
<dbReference type="GO" id="GO:0008121">
    <property type="term" value="F:ubiquinol-cytochrome-c reductase activity"/>
    <property type="evidence" value="ECO:0007669"/>
    <property type="project" value="UniProtKB-EC"/>
</dbReference>
<dbReference type="FunFam" id="1.10.760.10:FF:000009">
    <property type="entry name" value="Cytochrome bc1 complex cytochrome c subunit"/>
    <property type="match status" value="1"/>
</dbReference>
<dbReference type="Gene3D" id="1.10.760.10">
    <property type="entry name" value="Cytochrome c-like domain"/>
    <property type="match status" value="2"/>
</dbReference>
<dbReference type="InterPro" id="IPR009152">
    <property type="entry name" value="bc1_cytC-su"/>
</dbReference>
<dbReference type="InterPro" id="IPR009056">
    <property type="entry name" value="Cyt_c-like_dom"/>
</dbReference>
<dbReference type="InterPro" id="IPR036909">
    <property type="entry name" value="Cyt_c-like_dom_sf"/>
</dbReference>
<dbReference type="InterPro" id="IPR050597">
    <property type="entry name" value="Cytochrome_c_Oxidase_Subunit"/>
</dbReference>
<dbReference type="PANTHER" id="PTHR33751">
    <property type="entry name" value="CBB3-TYPE CYTOCHROME C OXIDASE SUBUNIT FIXP"/>
    <property type="match status" value="1"/>
</dbReference>
<dbReference type="PANTHER" id="PTHR33751:SF13">
    <property type="entry name" value="CYTOCHROME BC1 COMPLEX CYTOCHROME C SUBUNIT"/>
    <property type="match status" value="1"/>
</dbReference>
<dbReference type="Pfam" id="PF00034">
    <property type="entry name" value="Cytochrom_C"/>
    <property type="match status" value="1"/>
</dbReference>
<dbReference type="Pfam" id="PF13442">
    <property type="entry name" value="Cytochrome_CBB3"/>
    <property type="match status" value="1"/>
</dbReference>
<dbReference type="PIRSF" id="PIRSF000007">
    <property type="entry name" value="Ubiq_cycred_cyc"/>
    <property type="match status" value="1"/>
</dbReference>
<dbReference type="SUPFAM" id="SSF46626">
    <property type="entry name" value="Cytochrome c"/>
    <property type="match status" value="2"/>
</dbReference>
<dbReference type="PROSITE" id="PS51007">
    <property type="entry name" value="CYTC"/>
    <property type="match status" value="2"/>
</dbReference>
<comment type="function">
    <text evidence="1">Cytochrome b subunit of the cytochrome bc1 complex, an essential component of the respiratory electron transport chain required for ATP synthesis. The bc1 complex catalyzes the oxidation of ubiquinol and the reduction of cytochrome c in the respiratory chain. The bc1 complex operates through a Q-cycle mechanism that couples electron transfer to generation of the proton gradient that drives ATP synthesis.</text>
</comment>
<comment type="catalytic activity">
    <reaction evidence="1">
        <text>a quinol + 2 Fe(III)-[cytochrome c](out) = a quinone + 2 Fe(II)-[cytochrome c](out) + 2 H(+)(out)</text>
        <dbReference type="Rhea" id="RHEA:11484"/>
        <dbReference type="Rhea" id="RHEA-COMP:10350"/>
        <dbReference type="Rhea" id="RHEA-COMP:14399"/>
        <dbReference type="ChEBI" id="CHEBI:15378"/>
        <dbReference type="ChEBI" id="CHEBI:24646"/>
        <dbReference type="ChEBI" id="CHEBI:29033"/>
        <dbReference type="ChEBI" id="CHEBI:29034"/>
        <dbReference type="ChEBI" id="CHEBI:132124"/>
        <dbReference type="EC" id="7.1.1.8"/>
    </reaction>
</comment>
<comment type="subunit">
    <text evidence="1">The cytochrome bc1 complex is composed of a cytochrome b (QcrB), the Rieske iron-sulfur protein (QcrA) and a diheme cytochrome c (QcrC) subunit.</text>
</comment>
<comment type="subcellular location">
    <subcellularLocation>
        <location evidence="3">Cell membrane</location>
        <topology evidence="3">Multi-pass membrane protein</topology>
    </subcellularLocation>
</comment>
<comment type="PTM">
    <text evidence="2">Binds 2 heme c groups covalently per subunit.</text>
</comment>
<feature type="chain" id="PRO_0000427021" description="Cytochrome bc1 complex cytochrome c subunit">
    <location>
        <begin position="1"/>
        <end position="280"/>
    </location>
</feature>
<feature type="transmembrane region" description="Helical" evidence="3">
    <location>
        <begin position="25"/>
        <end position="45"/>
    </location>
</feature>
<feature type="transmembrane region" description="Helical" evidence="3">
    <location>
        <begin position="258"/>
        <end position="278"/>
    </location>
</feature>
<feature type="domain" description="Cytochrome c 1" evidence="4">
    <location>
        <begin position="60"/>
        <end position="140"/>
    </location>
</feature>
<feature type="domain" description="Cytochrome c 2" evidence="4">
    <location>
        <begin position="161"/>
        <end position="239"/>
    </location>
</feature>
<feature type="binding site" description="covalent" evidence="4">
    <location>
        <position position="73"/>
    </location>
    <ligand>
        <name>heme c</name>
        <dbReference type="ChEBI" id="CHEBI:61717"/>
        <label>1</label>
    </ligand>
</feature>
<feature type="binding site" description="covalent" evidence="4">
    <location>
        <position position="76"/>
    </location>
    <ligand>
        <name>heme c</name>
        <dbReference type="ChEBI" id="CHEBI:61717"/>
        <label>1</label>
    </ligand>
</feature>
<feature type="binding site" description="axial binding residue" evidence="4">
    <location>
        <position position="77"/>
    </location>
    <ligand>
        <name>heme c</name>
        <dbReference type="ChEBI" id="CHEBI:61717"/>
        <label>1</label>
    </ligand>
    <ligandPart>
        <name>Fe</name>
        <dbReference type="ChEBI" id="CHEBI:18248"/>
    </ligandPart>
</feature>
<feature type="binding site" description="covalent" evidence="4">
    <location>
        <position position="174"/>
    </location>
    <ligand>
        <name>heme c</name>
        <dbReference type="ChEBI" id="CHEBI:61717"/>
        <label>2</label>
    </ligand>
</feature>
<feature type="binding site" description="covalent" evidence="4">
    <location>
        <position position="177"/>
    </location>
    <ligand>
        <name>heme c</name>
        <dbReference type="ChEBI" id="CHEBI:61717"/>
        <label>2</label>
    </ligand>
</feature>
<feature type="binding site" description="axial binding residue" evidence="4">
    <location>
        <position position="178"/>
    </location>
    <ligand>
        <name>heme c</name>
        <dbReference type="ChEBI" id="CHEBI:61717"/>
        <label>2</label>
    </ligand>
    <ligandPart>
        <name>Fe</name>
        <dbReference type="ChEBI" id="CHEBI:18248"/>
    </ligandPart>
</feature>